<reference key="1">
    <citation type="journal article" date="2006" name="Proc. Natl. Acad. Sci. U.S.A.">
        <title>Comparative genomics of the lactic acid bacteria.</title>
        <authorList>
            <person name="Makarova K.S."/>
            <person name="Slesarev A."/>
            <person name="Wolf Y.I."/>
            <person name="Sorokin A."/>
            <person name="Mirkin B."/>
            <person name="Koonin E.V."/>
            <person name="Pavlov A."/>
            <person name="Pavlova N."/>
            <person name="Karamychev V."/>
            <person name="Polouchine N."/>
            <person name="Shakhova V."/>
            <person name="Grigoriev I."/>
            <person name="Lou Y."/>
            <person name="Rohksar D."/>
            <person name="Lucas S."/>
            <person name="Huang K."/>
            <person name="Goodstein D.M."/>
            <person name="Hawkins T."/>
            <person name="Plengvidhya V."/>
            <person name="Welker D."/>
            <person name="Hughes J."/>
            <person name="Goh Y."/>
            <person name="Benson A."/>
            <person name="Baldwin K."/>
            <person name="Lee J.-H."/>
            <person name="Diaz-Muniz I."/>
            <person name="Dosti B."/>
            <person name="Smeianov V."/>
            <person name="Wechter W."/>
            <person name="Barabote R."/>
            <person name="Lorca G."/>
            <person name="Altermann E."/>
            <person name="Barrangou R."/>
            <person name="Ganesan B."/>
            <person name="Xie Y."/>
            <person name="Rawsthorne H."/>
            <person name="Tamir D."/>
            <person name="Parker C."/>
            <person name="Breidt F."/>
            <person name="Broadbent J.R."/>
            <person name="Hutkins R."/>
            <person name="O'Sullivan D."/>
            <person name="Steele J."/>
            <person name="Unlu G."/>
            <person name="Saier M.H. Jr."/>
            <person name="Klaenhammer T."/>
            <person name="Richardson P."/>
            <person name="Kozyavkin S."/>
            <person name="Weimer B.C."/>
            <person name="Mills D.A."/>
        </authorList>
    </citation>
    <scope>NUCLEOTIDE SEQUENCE [LARGE SCALE GENOMIC DNA]</scope>
    <source>
        <strain>ATCC BAA-491 / LMD-9</strain>
    </source>
</reference>
<name>QUEA_STRTD</name>
<comment type="function">
    <text evidence="1">Transfers and isomerizes the ribose moiety from AdoMet to the 7-aminomethyl group of 7-deazaguanine (preQ1-tRNA) to give epoxyqueuosine (oQ-tRNA).</text>
</comment>
<comment type="catalytic activity">
    <reaction evidence="1">
        <text>7-aminomethyl-7-carbaguanosine(34) in tRNA + S-adenosyl-L-methionine = epoxyqueuosine(34) in tRNA + adenine + L-methionine + 2 H(+)</text>
        <dbReference type="Rhea" id="RHEA:32155"/>
        <dbReference type="Rhea" id="RHEA-COMP:10342"/>
        <dbReference type="Rhea" id="RHEA-COMP:18582"/>
        <dbReference type="ChEBI" id="CHEBI:15378"/>
        <dbReference type="ChEBI" id="CHEBI:16708"/>
        <dbReference type="ChEBI" id="CHEBI:57844"/>
        <dbReference type="ChEBI" id="CHEBI:59789"/>
        <dbReference type="ChEBI" id="CHEBI:82833"/>
        <dbReference type="ChEBI" id="CHEBI:194443"/>
        <dbReference type="EC" id="2.4.99.17"/>
    </reaction>
</comment>
<comment type="pathway">
    <text evidence="1">tRNA modification; tRNA-queuosine biosynthesis.</text>
</comment>
<comment type="subunit">
    <text evidence="1">Monomer.</text>
</comment>
<comment type="subcellular location">
    <subcellularLocation>
        <location evidence="1">Cytoplasm</location>
    </subcellularLocation>
</comment>
<comment type="similarity">
    <text evidence="1">Belongs to the QueA family.</text>
</comment>
<protein>
    <recommendedName>
        <fullName evidence="1">S-adenosylmethionine:tRNA ribosyltransferase-isomerase</fullName>
        <ecNumber evidence="1">2.4.99.17</ecNumber>
    </recommendedName>
    <alternativeName>
        <fullName evidence="1">Queuosine biosynthesis protein QueA</fullName>
    </alternativeName>
</protein>
<sequence>MNTNDFDFELPEELIAQTPLEQRDASKLLVIDPVTREMTDTHFDHIIDQLNPGDALVMNNTRVLPARLYGEKTDTHGHVEFLLLKNTQGDQWEVLAKPAKRLKVGAKVSFGDGRLTATVTKELDHGGRIVEFSYDGIFLEVLESLGEMPLPPYIHEKLEDRDRYQTVYAKENGSAAAPTAGLHFTPELLQKIEAKGVKLVYLTLHVGLGTFRPVSVDNVDEHEMHSEFYTLSQEAADTLNSVKAAGGRIVAVGTTSIRTLETIGNKYDGQLQADSGWTNIFIKPGYQFTVVDAFSTNFHLPKSTLVMLVSAFAGREFVLEAYKHAVQERYRFFSFGDAMFVTRPSEK</sequence>
<keyword id="KW-0963">Cytoplasm</keyword>
<keyword id="KW-0671">Queuosine biosynthesis</keyword>
<keyword id="KW-0949">S-adenosyl-L-methionine</keyword>
<keyword id="KW-0808">Transferase</keyword>
<feature type="chain" id="PRO_1000015295" description="S-adenosylmethionine:tRNA ribosyltransferase-isomerase">
    <location>
        <begin position="1"/>
        <end position="347"/>
    </location>
</feature>
<evidence type="ECO:0000255" key="1">
    <source>
        <dbReference type="HAMAP-Rule" id="MF_00113"/>
    </source>
</evidence>
<organism>
    <name type="scientific">Streptococcus thermophilus (strain ATCC BAA-491 / LMD-9)</name>
    <dbReference type="NCBI Taxonomy" id="322159"/>
    <lineage>
        <taxon>Bacteria</taxon>
        <taxon>Bacillati</taxon>
        <taxon>Bacillota</taxon>
        <taxon>Bacilli</taxon>
        <taxon>Lactobacillales</taxon>
        <taxon>Streptococcaceae</taxon>
        <taxon>Streptococcus</taxon>
    </lineage>
</organism>
<accession>Q03LS2</accession>
<dbReference type="EC" id="2.4.99.17" evidence="1"/>
<dbReference type="EMBL" id="CP000419">
    <property type="protein sequence ID" value="ABJ65850.1"/>
    <property type="molecule type" value="Genomic_DNA"/>
</dbReference>
<dbReference type="RefSeq" id="WP_011680873.1">
    <property type="nucleotide sequence ID" value="NZ_CP086001.1"/>
</dbReference>
<dbReference type="SMR" id="Q03LS2"/>
<dbReference type="KEGG" id="ste:STER_0580"/>
<dbReference type="HOGENOM" id="CLU_039110_1_0_9"/>
<dbReference type="UniPathway" id="UPA00392"/>
<dbReference type="GO" id="GO:0005737">
    <property type="term" value="C:cytoplasm"/>
    <property type="evidence" value="ECO:0007669"/>
    <property type="project" value="UniProtKB-SubCell"/>
</dbReference>
<dbReference type="GO" id="GO:0051075">
    <property type="term" value="F:S-adenosylmethionine:tRNA ribosyltransferase-isomerase activity"/>
    <property type="evidence" value="ECO:0007669"/>
    <property type="project" value="UniProtKB-EC"/>
</dbReference>
<dbReference type="GO" id="GO:0008616">
    <property type="term" value="P:queuosine biosynthetic process"/>
    <property type="evidence" value="ECO:0007669"/>
    <property type="project" value="UniProtKB-UniRule"/>
</dbReference>
<dbReference type="GO" id="GO:0002099">
    <property type="term" value="P:tRNA wobble guanine modification"/>
    <property type="evidence" value="ECO:0007669"/>
    <property type="project" value="TreeGrafter"/>
</dbReference>
<dbReference type="FunFam" id="2.40.10.240:FF:000002">
    <property type="entry name" value="S-adenosylmethionine:tRNA ribosyltransferase-isomerase"/>
    <property type="match status" value="1"/>
</dbReference>
<dbReference type="FunFam" id="3.40.1780.10:FF:000001">
    <property type="entry name" value="S-adenosylmethionine:tRNA ribosyltransferase-isomerase"/>
    <property type="match status" value="1"/>
</dbReference>
<dbReference type="Gene3D" id="2.40.10.240">
    <property type="entry name" value="QueA-like"/>
    <property type="match status" value="1"/>
</dbReference>
<dbReference type="Gene3D" id="3.40.1780.10">
    <property type="entry name" value="QueA-like"/>
    <property type="match status" value="1"/>
</dbReference>
<dbReference type="HAMAP" id="MF_00113">
    <property type="entry name" value="QueA"/>
    <property type="match status" value="1"/>
</dbReference>
<dbReference type="InterPro" id="IPR003699">
    <property type="entry name" value="QueA"/>
</dbReference>
<dbReference type="InterPro" id="IPR042118">
    <property type="entry name" value="QueA_dom1"/>
</dbReference>
<dbReference type="InterPro" id="IPR042119">
    <property type="entry name" value="QueA_dom2"/>
</dbReference>
<dbReference type="InterPro" id="IPR036100">
    <property type="entry name" value="QueA_sf"/>
</dbReference>
<dbReference type="NCBIfam" id="NF001140">
    <property type="entry name" value="PRK00147.1"/>
    <property type="match status" value="1"/>
</dbReference>
<dbReference type="NCBIfam" id="TIGR00113">
    <property type="entry name" value="queA"/>
    <property type="match status" value="1"/>
</dbReference>
<dbReference type="PANTHER" id="PTHR30307">
    <property type="entry name" value="S-ADENOSYLMETHIONINE:TRNA RIBOSYLTRANSFERASE-ISOMERASE"/>
    <property type="match status" value="1"/>
</dbReference>
<dbReference type="PANTHER" id="PTHR30307:SF0">
    <property type="entry name" value="S-ADENOSYLMETHIONINE:TRNA RIBOSYLTRANSFERASE-ISOMERASE"/>
    <property type="match status" value="1"/>
</dbReference>
<dbReference type="Pfam" id="PF02547">
    <property type="entry name" value="Queuosine_synth"/>
    <property type="match status" value="1"/>
</dbReference>
<dbReference type="SUPFAM" id="SSF111337">
    <property type="entry name" value="QueA-like"/>
    <property type="match status" value="1"/>
</dbReference>
<gene>
    <name evidence="1" type="primary">queA</name>
    <name type="ordered locus">STER_0580</name>
</gene>
<proteinExistence type="inferred from homology"/>